<organism>
    <name type="scientific">Rattus norvegicus</name>
    <name type="common">Rat</name>
    <dbReference type="NCBI Taxonomy" id="10116"/>
    <lineage>
        <taxon>Eukaryota</taxon>
        <taxon>Metazoa</taxon>
        <taxon>Chordata</taxon>
        <taxon>Craniata</taxon>
        <taxon>Vertebrata</taxon>
        <taxon>Euteleostomi</taxon>
        <taxon>Mammalia</taxon>
        <taxon>Eutheria</taxon>
        <taxon>Euarchontoglires</taxon>
        <taxon>Glires</taxon>
        <taxon>Rodentia</taxon>
        <taxon>Myomorpha</taxon>
        <taxon>Muroidea</taxon>
        <taxon>Muridae</taxon>
        <taxon>Murinae</taxon>
        <taxon>Rattus</taxon>
    </lineage>
</organism>
<keyword id="KW-0007">Acetylation</keyword>
<keyword id="KW-0067">ATP-binding</keyword>
<keyword id="KW-1003">Cell membrane</keyword>
<keyword id="KW-0966">Cell projection</keyword>
<keyword id="KW-0963">Cytoplasm</keyword>
<keyword id="KW-0418">Kinase</keyword>
<keyword id="KW-0443">Lipid metabolism</keyword>
<keyword id="KW-0458">Lysosome</keyword>
<keyword id="KW-0472">Membrane</keyword>
<keyword id="KW-0547">Nucleotide-binding</keyword>
<keyword id="KW-0539">Nucleus</keyword>
<keyword id="KW-0597">Phosphoprotein</keyword>
<keyword id="KW-1185">Reference proteome</keyword>
<keyword id="KW-0808">Transferase</keyword>
<dbReference type="EC" id="2.7.1.149"/>
<dbReference type="EMBL" id="AB032899">
    <property type="protein sequence ID" value="BAA85160.1"/>
    <property type="molecule type" value="mRNA"/>
</dbReference>
<dbReference type="RefSeq" id="NP_446378.1">
    <property type="nucleotide sequence ID" value="NM_053926.2"/>
</dbReference>
<dbReference type="SMR" id="Q9R0I8"/>
<dbReference type="BioGRID" id="250590">
    <property type="interactions" value="1"/>
</dbReference>
<dbReference type="FunCoup" id="Q9R0I8">
    <property type="interactions" value="1996"/>
</dbReference>
<dbReference type="IntAct" id="Q9R0I8">
    <property type="interactions" value="1"/>
</dbReference>
<dbReference type="GlyGen" id="Q9R0I8">
    <property type="glycosylation" value="1 site"/>
</dbReference>
<dbReference type="iPTMnet" id="Q9R0I8"/>
<dbReference type="PhosphoSitePlus" id="Q9R0I8"/>
<dbReference type="SwissPalm" id="Q9R0I8"/>
<dbReference type="jPOST" id="Q9R0I8"/>
<dbReference type="PaxDb" id="10116-ENSRNOP00000022375"/>
<dbReference type="Ensembl" id="ENSRNOT00000022375.8">
    <property type="protein sequence ID" value="ENSRNOP00000022375.8"/>
    <property type="gene ID" value="ENSRNOG00000016670.8"/>
</dbReference>
<dbReference type="GeneID" id="116723"/>
<dbReference type="KEGG" id="rno:116723"/>
<dbReference type="UCSC" id="RGD:621708">
    <property type="organism name" value="rat"/>
</dbReference>
<dbReference type="AGR" id="RGD:621708"/>
<dbReference type="CTD" id="5305"/>
<dbReference type="RGD" id="621708">
    <property type="gene designation" value="Pip4k2a"/>
</dbReference>
<dbReference type="eggNOG" id="KOG0229">
    <property type="taxonomic scope" value="Eukaryota"/>
</dbReference>
<dbReference type="GeneTree" id="ENSGT00940000156508"/>
<dbReference type="InParanoid" id="Q9R0I8"/>
<dbReference type="OMA" id="DYSPMCY"/>
<dbReference type="OrthoDB" id="20783at2759"/>
<dbReference type="PhylomeDB" id="Q9R0I8"/>
<dbReference type="Reactome" id="R-RNO-1660499">
    <property type="pathway name" value="Synthesis of PIPs at the plasma membrane"/>
</dbReference>
<dbReference type="Reactome" id="R-RNO-6811555">
    <property type="pathway name" value="PI5P Regulates TP53 Acetylation"/>
</dbReference>
<dbReference type="Reactome" id="R-RNO-6811558">
    <property type="pathway name" value="PI5P, PP2A and IER3 Regulate PI3K/AKT Signaling"/>
</dbReference>
<dbReference type="Reactome" id="R-RNO-8847453">
    <property type="pathway name" value="Synthesis of PIPs in the nucleus"/>
</dbReference>
<dbReference type="PRO" id="PR:Q9R0I8"/>
<dbReference type="Proteomes" id="UP000002494">
    <property type="component" value="Chromosome 17"/>
</dbReference>
<dbReference type="GO" id="GO:0005776">
    <property type="term" value="C:autophagosome"/>
    <property type="evidence" value="ECO:0000266"/>
    <property type="project" value="RGD"/>
</dbReference>
<dbReference type="GO" id="GO:0005829">
    <property type="term" value="C:cytosol"/>
    <property type="evidence" value="ECO:0000266"/>
    <property type="project" value="RGD"/>
</dbReference>
<dbReference type="GO" id="GO:0005764">
    <property type="term" value="C:lysosome"/>
    <property type="evidence" value="ECO:0000250"/>
    <property type="project" value="UniProtKB"/>
</dbReference>
<dbReference type="GO" id="GO:0005634">
    <property type="term" value="C:nucleus"/>
    <property type="evidence" value="ECO:0007669"/>
    <property type="project" value="UniProtKB-SubCell"/>
</dbReference>
<dbReference type="GO" id="GO:0001917">
    <property type="term" value="C:photoreceptor inner segment"/>
    <property type="evidence" value="ECO:0007669"/>
    <property type="project" value="UniProtKB-SubCell"/>
</dbReference>
<dbReference type="GO" id="GO:0001750">
    <property type="term" value="C:photoreceptor outer segment"/>
    <property type="evidence" value="ECO:0007669"/>
    <property type="project" value="UniProtKB-SubCell"/>
</dbReference>
<dbReference type="GO" id="GO:0005886">
    <property type="term" value="C:plasma membrane"/>
    <property type="evidence" value="ECO:0000266"/>
    <property type="project" value="RGD"/>
</dbReference>
<dbReference type="GO" id="GO:0016308">
    <property type="term" value="F:1-phosphatidylinositol-4-phosphate 5-kinase activity"/>
    <property type="evidence" value="ECO:0000250"/>
    <property type="project" value="UniProtKB"/>
</dbReference>
<dbReference type="GO" id="GO:0016309">
    <property type="term" value="F:1-phosphatidylinositol-5-phosphate 4-kinase activity"/>
    <property type="evidence" value="ECO:0000266"/>
    <property type="project" value="RGD"/>
</dbReference>
<dbReference type="GO" id="GO:0005524">
    <property type="term" value="F:ATP binding"/>
    <property type="evidence" value="ECO:0007669"/>
    <property type="project" value="UniProtKB-KW"/>
</dbReference>
<dbReference type="GO" id="GO:0042803">
    <property type="term" value="F:protein homodimerization activity"/>
    <property type="evidence" value="ECO:0000250"/>
    <property type="project" value="UniProtKB"/>
</dbReference>
<dbReference type="GO" id="GO:1902635">
    <property type="term" value="P:1-phosphatidyl-1D-myo-inositol 4,5-bisphosphate biosynthetic process"/>
    <property type="evidence" value="ECO:0000250"/>
    <property type="project" value="UniProtKB"/>
</dbReference>
<dbReference type="GO" id="GO:0061909">
    <property type="term" value="P:autophagosome-lysosome fusion"/>
    <property type="evidence" value="ECO:0000250"/>
    <property type="project" value="UniProtKB"/>
</dbReference>
<dbReference type="GO" id="GO:0035855">
    <property type="term" value="P:megakaryocyte development"/>
    <property type="evidence" value="ECO:0000266"/>
    <property type="project" value="RGD"/>
</dbReference>
<dbReference type="GO" id="GO:0046627">
    <property type="term" value="P:negative regulation of insulin receptor signaling pathway"/>
    <property type="evidence" value="ECO:0000250"/>
    <property type="project" value="UniProtKB"/>
</dbReference>
<dbReference type="GO" id="GO:0046854">
    <property type="term" value="P:phosphatidylinositol phosphate biosynthetic process"/>
    <property type="evidence" value="ECO:0000318"/>
    <property type="project" value="GO_Central"/>
</dbReference>
<dbReference type="GO" id="GO:2000786">
    <property type="term" value="P:positive regulation of autophagosome assembly"/>
    <property type="evidence" value="ECO:0000266"/>
    <property type="project" value="RGD"/>
</dbReference>
<dbReference type="GO" id="GO:0010506">
    <property type="term" value="P:regulation of autophagy"/>
    <property type="evidence" value="ECO:0000250"/>
    <property type="project" value="UniProtKB"/>
</dbReference>
<dbReference type="GO" id="GO:0090119">
    <property type="term" value="P:vesicle-mediated cholesterol transport"/>
    <property type="evidence" value="ECO:0000250"/>
    <property type="project" value="UniProtKB"/>
</dbReference>
<dbReference type="CDD" id="cd17309">
    <property type="entry name" value="PIPKc_PIP5K2A"/>
    <property type="match status" value="1"/>
</dbReference>
<dbReference type="FunFam" id="3.30.800.10:FF:000002">
    <property type="entry name" value="Phosphatidylinositol 5-phosphate 4-kinase type-2 beta"/>
    <property type="match status" value="1"/>
</dbReference>
<dbReference type="FunFam" id="3.30.810.10:FF:000003">
    <property type="entry name" value="Phosphatidylinositol 5-phosphate 4-kinase type-2 beta"/>
    <property type="match status" value="1"/>
</dbReference>
<dbReference type="FunFam" id="3.30.810.10:FF:000004">
    <property type="entry name" value="Phosphatidylinositol 5-phosphate 4-kinase type-2 beta"/>
    <property type="match status" value="1"/>
</dbReference>
<dbReference type="Gene3D" id="3.30.810.10">
    <property type="entry name" value="2-Layer Sandwich"/>
    <property type="match status" value="2"/>
</dbReference>
<dbReference type="Gene3D" id="3.30.800.10">
    <property type="entry name" value="Phosphatidylinositol Phosphate Kinase II Beta"/>
    <property type="match status" value="1"/>
</dbReference>
<dbReference type="InterPro" id="IPR027483">
    <property type="entry name" value="PInositol-4-P-4/5-kinase_C_sf"/>
</dbReference>
<dbReference type="InterPro" id="IPR002498">
    <property type="entry name" value="PInositol-4-P-4/5-kinase_core"/>
</dbReference>
<dbReference type="InterPro" id="IPR027484">
    <property type="entry name" value="PInositol-4-P-5-kinase_N"/>
</dbReference>
<dbReference type="InterPro" id="IPR023610">
    <property type="entry name" value="PInositol-4/5-P-5/4-kinase"/>
</dbReference>
<dbReference type="PANTHER" id="PTHR23086:SF21">
    <property type="entry name" value="PHOSPHATIDYLINOSITOL 5-PHOSPHATE 4-KINASE TYPE-2 ALPHA"/>
    <property type="match status" value="1"/>
</dbReference>
<dbReference type="PANTHER" id="PTHR23086">
    <property type="entry name" value="PHOSPHATIDYLINOSITOL-4-PHOSPHATE 5-KINASE"/>
    <property type="match status" value="1"/>
</dbReference>
<dbReference type="Pfam" id="PF01504">
    <property type="entry name" value="PIP5K"/>
    <property type="match status" value="1"/>
</dbReference>
<dbReference type="SMART" id="SM00330">
    <property type="entry name" value="PIPKc"/>
    <property type="match status" value="1"/>
</dbReference>
<dbReference type="SUPFAM" id="SSF56104">
    <property type="entry name" value="SAICAR synthase-like"/>
    <property type="match status" value="1"/>
</dbReference>
<dbReference type="PROSITE" id="PS51455">
    <property type="entry name" value="PIPK"/>
    <property type="match status" value="1"/>
</dbReference>
<gene>
    <name evidence="10" type="primary">Pip4k2a</name>
    <name evidence="8" type="synonym">Pip4ka</name>
    <name type="synonym">Pip5k2a</name>
</gene>
<protein>
    <recommendedName>
        <fullName>Phosphatidylinositol 5-phosphate 4-kinase type-2 alpha</fullName>
        <ecNumber>2.7.1.149</ecNumber>
    </recommendedName>
    <alternativeName>
        <fullName>1-phosphatidylinositol 5-phosphate 4-kinase 2-alpha</fullName>
    </alternativeName>
    <alternativeName>
        <fullName>Diphosphoinositide kinase 2-alpha</fullName>
    </alternativeName>
    <alternativeName>
        <fullName>PIPK2 alpha</fullName>
    </alternativeName>
    <alternativeName>
        <fullName>Phosphatidylinositol 5-phosphate 4-kinase type II alpha</fullName>
        <shortName>PI(5)P 4-kinase type II alpha</shortName>
        <shortName>PIP4KII-alpha</shortName>
    </alternativeName>
    <alternativeName>
        <fullName>PtdIns(5)P-4-kinase isoform 2-alpha</fullName>
    </alternativeName>
</protein>
<accession>Q9R0I8</accession>
<proteinExistence type="evidence at protein level"/>
<sequence length="406" mass="46210">MATPSNLGSSVLASKTKTKKKHFVAQKVKLFRASDPLLSVLMWGVNHSINELSHVQIPVMLMPDDFKAYSKIKVDNHLFNKENMPSHFKFKEYCPMVFRNLRERFGIDDQDFQNSLTRSAPLPNDSQARSGARFHTSYDKRYVIKTITSEDVAEMHNILKKYHQYIVECHGVTLLPQFLGMYRLNVDGVEIYVIVTRNVFSHRLSVYRKYDLKGSTVAREASDKEKAKELPTLKDNDFINEGQKIYIDDSNKKIFLEKLKKDVEFLAQLKLMDYSLLVGIHDVERAEQEEVECEENEGEEEGESDGAHPIGTPPDSPGNTLNSSPPLAPGEFDPNIDVYAIKCHENAPRKEVYFMAIIDILTHYDAKKKAAHAAKTVKHGAGAEISTVNPEQYSKRFLDFIGHILT</sequence>
<evidence type="ECO:0000250" key="1">
    <source>
        <dbReference type="UniProtKB" id="O70172"/>
    </source>
</evidence>
<evidence type="ECO:0000250" key="2">
    <source>
        <dbReference type="UniProtKB" id="P48426"/>
    </source>
</evidence>
<evidence type="ECO:0000250" key="3">
    <source>
        <dbReference type="UniProtKB" id="Q8TBX8"/>
    </source>
</evidence>
<evidence type="ECO:0000255" key="4">
    <source>
        <dbReference type="PROSITE-ProRule" id="PRU00781"/>
    </source>
</evidence>
<evidence type="ECO:0000256" key="5">
    <source>
        <dbReference type="SAM" id="MobiDB-lite"/>
    </source>
</evidence>
<evidence type="ECO:0000269" key="6">
    <source>
    </source>
</evidence>
<evidence type="ECO:0000269" key="7">
    <source>
    </source>
</evidence>
<evidence type="ECO:0000303" key="8">
    <source>
    </source>
</evidence>
<evidence type="ECO:0000305" key="9">
    <source>
    </source>
</evidence>
<evidence type="ECO:0000312" key="10">
    <source>
        <dbReference type="RGD" id="621708"/>
    </source>
</evidence>
<comment type="function">
    <text evidence="1 2 6 7">Catalyzes the phosphorylation of phosphatidylinositol 5-phosphate (PtdIns5P) on the fourth hydroxyl of the myo-inositol ring, to form phosphatidylinositol 4,5-bisphosphate (PtdIns(4,5)P2). Has both ATP- and GTP-dependent kinase activities. May exert its function by regulating the levels of PtdIns5P, which functions in the cytosol by increasing AKT activity and in the nucleus signals through ING2 (By similarity). May regulate the pool of cytosolic PtdIns5P in response to the activation of tyrosine phosphorylation (PubMed:20204506). Required for lysosome-peroxisome membrane contacts and intracellular cholesterol transport through modulating peroxisomal PtdIns(4,5)P2 level (By similarity). In collaboration with PIP4K2B, has a role in mediating autophagy in times of nutrient stress (By similarity). Required for autophagosome-lysosome fusion and the regulation of cellular lipid metabolism (By similarity). Negatively regulates insulin signaling through a catalytic-independent mechanism. PIP4Ks interact with PIP5Ks and suppress PIP5K-mediated PtdIns(4,5)P2 synthesis and insulin-dependent conversion to PtdIns(3,4,5)P3 (PubMed:21847559). May be involved in thrombopoiesis, and the terminal maturation of megakaryocytes and regulation of their size (By similarity).</text>
</comment>
<comment type="catalytic activity">
    <reaction evidence="6">
        <text>a 1,2-diacyl-sn-glycero-3-phospho-(1D-myo-inositol-5-phosphate) + ATP = a 1,2-diacyl-sn-glycero-3-phospho-(1D-myo-inositol-4,5-bisphosphate) + ADP + H(+)</text>
        <dbReference type="Rhea" id="RHEA:12280"/>
        <dbReference type="ChEBI" id="CHEBI:15378"/>
        <dbReference type="ChEBI" id="CHEBI:30616"/>
        <dbReference type="ChEBI" id="CHEBI:57795"/>
        <dbReference type="ChEBI" id="CHEBI:58456"/>
        <dbReference type="ChEBI" id="CHEBI:456216"/>
        <dbReference type="EC" id="2.7.1.149"/>
    </reaction>
    <physiologicalReaction direction="left-to-right" evidence="9">
        <dbReference type="Rhea" id="RHEA:12281"/>
    </physiologicalReaction>
</comment>
<comment type="catalytic activity">
    <reaction evidence="2">
        <text>1,2-dihexadecanoyl-sn-glycero-3-phospho-(1D-myo-inositol-5-phosphate) + ATP = 1,2-dihexadecanoyl-sn-glycero-3-phospho-(1D-myo-inositol-4,5-bisphosphate) + ADP + H(+)</text>
        <dbReference type="Rhea" id="RHEA:55992"/>
        <dbReference type="ChEBI" id="CHEBI:15378"/>
        <dbReference type="ChEBI" id="CHEBI:30616"/>
        <dbReference type="ChEBI" id="CHEBI:83423"/>
        <dbReference type="ChEBI" id="CHEBI:84968"/>
        <dbReference type="ChEBI" id="CHEBI:456216"/>
    </reaction>
    <physiologicalReaction direction="left-to-right" evidence="2">
        <dbReference type="Rhea" id="RHEA:55993"/>
    </physiologicalReaction>
</comment>
<comment type="catalytic activity">
    <reaction evidence="2">
        <text>1,2-dihexadecanoyl-sn-glycero-3-phospho-(1D-myo-inositol-5-phosphate) + GTP = 1,2-dihexadecanoyl-sn-glycero-3-phospho-(1D-myo-inositol-4,5-bisphosphate) + GDP + H(+)</text>
        <dbReference type="Rhea" id="RHEA:55964"/>
        <dbReference type="ChEBI" id="CHEBI:15378"/>
        <dbReference type="ChEBI" id="CHEBI:37565"/>
        <dbReference type="ChEBI" id="CHEBI:58189"/>
        <dbReference type="ChEBI" id="CHEBI:83423"/>
        <dbReference type="ChEBI" id="CHEBI:84968"/>
    </reaction>
    <physiologicalReaction direction="left-to-right" evidence="2">
        <dbReference type="Rhea" id="RHEA:55965"/>
    </physiologicalReaction>
</comment>
<comment type="activity regulation">
    <text evidence="6">In rod outer segments, activated by light.</text>
</comment>
<comment type="subunit">
    <text evidence="2 3">Homodimer. Interacts with PIP4K2B; the interaction may regulate localization to the nucleus (By similarity). Probably interacts with PIP5K1A; the interaction inhibits PIP5K1A kinase activity (By similarity).</text>
</comment>
<comment type="subcellular location">
    <subcellularLocation>
        <location evidence="1">Cell membrane</location>
    </subcellularLocation>
    <subcellularLocation>
        <location evidence="2">Nucleus</location>
    </subcellularLocation>
    <subcellularLocation>
        <location evidence="1">Lysosome</location>
    </subcellularLocation>
    <subcellularLocation>
        <location evidence="2">Cytoplasm</location>
    </subcellularLocation>
    <subcellularLocation>
        <location evidence="1">Photoreceptor inner segment</location>
    </subcellularLocation>
    <subcellularLocation>
        <location evidence="1">Cell projection</location>
        <location evidence="1">Cilium</location>
        <location evidence="1">Photoreceptor outer segment</location>
    </subcellularLocation>
    <text evidence="1 2">May translocate from the cytosol to the cell membrane upon activation of tyrosine phosphorylation. May translocate from the inner to the outer segments of the rod photoreceptor cells in response to light (By similarity). Localization to the nucleus is modulated by the interaction with PIP4K2B (By similarity).</text>
</comment>
<comment type="PTM">
    <text evidence="6">Phosphorylated in tyrosines. Phosphorylation is induced by light and increases kinase activity.</text>
</comment>
<reference key="1">
    <citation type="submission" date="1999-09" db="EMBL/GenBank/DDBJ databases">
        <title>Rattus rat phosphatidylinositol 5-phosphate 4-kinase alpha, complete cds.</title>
        <authorList>
            <person name="Kudo M."/>
            <person name="Saito S."/>
            <person name="Kondo H."/>
        </authorList>
    </citation>
    <scope>NUCLEOTIDE SEQUENCE [MRNA]</scope>
</reference>
<reference key="2">
    <citation type="journal article" date="2011" name="Neurochem. Res.">
        <title>Light-induced tyrosine phosphorylation of rod outer segment membrane proteins regulate the translocation, membrane binding and activation of type II alpha phosphatidylinositol-5-phosphate 4-kinase.</title>
        <authorList>
            <person name="Huang Z."/>
            <person name="Anderson R.E."/>
            <person name="Cao W."/>
            <person name="Wiechmann A.F."/>
            <person name="Rajala R.V.S."/>
        </authorList>
    </citation>
    <scope>SUBCELLULAR LOCATION</scope>
    <scope>TISSUE SPECIFICITY</scope>
    <scope>ACTIVITY REGULATION</scope>
    <scope>PHOSPHORYLATION</scope>
    <scope>FUNCTION</scope>
    <scope>CATALYTIC ACTIVITY</scope>
</reference>
<reference key="3">
    <citation type="journal article" date="2011" name="Pflugers Arch.">
        <title>Involvement of phosphatidylinositol 5-phosphate in insulin-stimulated glucose uptake in the L6 myotube model of skeletal muscle.</title>
        <authorList>
            <person name="Grainger D.L."/>
            <person name="Tavelis C."/>
            <person name="Ryan A.J."/>
            <person name="Hinchliffe K.A."/>
        </authorList>
    </citation>
    <scope>FUNCTION IN INSULIN-MEDIATED GLUCOSE UPTAKE</scope>
</reference>
<name>PI42A_RAT</name>
<feature type="initiator methionine" description="Removed" evidence="2">
    <location>
        <position position="1"/>
    </location>
</feature>
<feature type="chain" id="PRO_0000185468" description="Phosphatidylinositol 5-phosphate 4-kinase type-2 alpha">
    <location>
        <begin position="2"/>
        <end position="406"/>
    </location>
</feature>
<feature type="domain" description="PIPK" evidence="4">
    <location>
        <begin position="33"/>
        <end position="405"/>
    </location>
</feature>
<feature type="region of interest" description="Required for interaction with PIP5K1A" evidence="3">
    <location>
        <begin position="59"/>
        <end position="65"/>
    </location>
</feature>
<feature type="region of interest" description="Disordered" evidence="5">
    <location>
        <begin position="287"/>
        <end position="328"/>
    </location>
</feature>
<feature type="compositionally biased region" description="Acidic residues" evidence="5">
    <location>
        <begin position="289"/>
        <end position="304"/>
    </location>
</feature>
<feature type="modified residue" description="N-acetylalanine" evidence="2">
    <location>
        <position position="2"/>
    </location>
</feature>
<feature type="modified residue" description="Phosphothreonine" evidence="2">
    <location>
        <position position="3"/>
    </location>
</feature>
<feature type="modified residue" description="Phosphoserine" evidence="2">
    <location>
        <position position="14"/>
    </location>
</feature>
<feature type="modified residue" description="N6-acetyllysine" evidence="2">
    <location>
        <position position="89"/>
    </location>
</feature>
<feature type="modified residue" description="N6-acetyllysine" evidence="2">
    <location>
        <position position="145"/>
    </location>
</feature>